<reference key="1">
    <citation type="journal article" date="2002" name="Nature">
        <title>Comparison of the genomes of two Xanthomonas pathogens with differing host specificities.</title>
        <authorList>
            <person name="da Silva A.C.R."/>
            <person name="Ferro J.A."/>
            <person name="Reinach F.C."/>
            <person name="Farah C.S."/>
            <person name="Furlan L.R."/>
            <person name="Quaggio R.B."/>
            <person name="Monteiro-Vitorello C.B."/>
            <person name="Van Sluys M.A."/>
            <person name="Almeida N.F. Jr."/>
            <person name="Alves L.M.C."/>
            <person name="do Amaral A.M."/>
            <person name="Bertolini M.C."/>
            <person name="Camargo L.E.A."/>
            <person name="Camarotte G."/>
            <person name="Cannavan F."/>
            <person name="Cardozo J."/>
            <person name="Chambergo F."/>
            <person name="Ciapina L.P."/>
            <person name="Cicarelli R.M.B."/>
            <person name="Coutinho L.L."/>
            <person name="Cursino-Santos J.R."/>
            <person name="El-Dorry H."/>
            <person name="Faria J.B."/>
            <person name="Ferreira A.J.S."/>
            <person name="Ferreira R.C.C."/>
            <person name="Ferro M.I.T."/>
            <person name="Formighieri E.F."/>
            <person name="Franco M.C."/>
            <person name="Greggio C.C."/>
            <person name="Gruber A."/>
            <person name="Katsuyama A.M."/>
            <person name="Kishi L.T."/>
            <person name="Leite R.P."/>
            <person name="Lemos E.G.M."/>
            <person name="Lemos M.V.F."/>
            <person name="Locali E.C."/>
            <person name="Machado M.A."/>
            <person name="Madeira A.M.B.N."/>
            <person name="Martinez-Rossi N.M."/>
            <person name="Martins E.C."/>
            <person name="Meidanis J."/>
            <person name="Menck C.F.M."/>
            <person name="Miyaki C.Y."/>
            <person name="Moon D.H."/>
            <person name="Moreira L.M."/>
            <person name="Novo M.T.M."/>
            <person name="Okura V.K."/>
            <person name="Oliveira M.C."/>
            <person name="Oliveira V.R."/>
            <person name="Pereira H.A."/>
            <person name="Rossi A."/>
            <person name="Sena J.A.D."/>
            <person name="Silva C."/>
            <person name="de Souza R.F."/>
            <person name="Spinola L.A.F."/>
            <person name="Takita M.A."/>
            <person name="Tamura R.E."/>
            <person name="Teixeira E.C."/>
            <person name="Tezza R.I.D."/>
            <person name="Trindade dos Santos M."/>
            <person name="Truffi D."/>
            <person name="Tsai S.M."/>
            <person name="White F.F."/>
            <person name="Setubal J.C."/>
            <person name="Kitajima J.P."/>
        </authorList>
    </citation>
    <scope>NUCLEOTIDE SEQUENCE [LARGE SCALE GENOMIC DNA]</scope>
    <source>
        <strain>306</strain>
    </source>
</reference>
<protein>
    <recommendedName>
        <fullName evidence="1">Cytochrome c biogenesis ATP-binding export protein CcmA</fullName>
        <ecNumber evidence="1">7.6.2.5</ecNumber>
    </recommendedName>
    <alternativeName>
        <fullName evidence="1">Heme exporter protein A</fullName>
    </alternativeName>
</protein>
<organism>
    <name type="scientific">Xanthomonas axonopodis pv. citri (strain 306)</name>
    <dbReference type="NCBI Taxonomy" id="190486"/>
    <lineage>
        <taxon>Bacteria</taxon>
        <taxon>Pseudomonadati</taxon>
        <taxon>Pseudomonadota</taxon>
        <taxon>Gammaproteobacteria</taxon>
        <taxon>Lysobacterales</taxon>
        <taxon>Lysobacteraceae</taxon>
        <taxon>Xanthomonas</taxon>
    </lineage>
</organism>
<evidence type="ECO:0000255" key="1">
    <source>
        <dbReference type="HAMAP-Rule" id="MF_01707"/>
    </source>
</evidence>
<comment type="function">
    <text evidence="1">Part of the ABC transporter complex CcmAB involved in the biogenesis of c-type cytochromes; once thought to export heme, this seems not to be the case, but its exact role is uncertain. Responsible for energy coupling to the transport system.</text>
</comment>
<comment type="catalytic activity">
    <reaction evidence="1">
        <text>heme b(in) + ATP + H2O = heme b(out) + ADP + phosphate + H(+)</text>
        <dbReference type="Rhea" id="RHEA:19261"/>
        <dbReference type="ChEBI" id="CHEBI:15377"/>
        <dbReference type="ChEBI" id="CHEBI:15378"/>
        <dbReference type="ChEBI" id="CHEBI:30616"/>
        <dbReference type="ChEBI" id="CHEBI:43474"/>
        <dbReference type="ChEBI" id="CHEBI:60344"/>
        <dbReference type="ChEBI" id="CHEBI:456216"/>
        <dbReference type="EC" id="7.6.2.5"/>
    </reaction>
</comment>
<comment type="subunit">
    <text evidence="1">The complex is composed of two ATP-binding proteins (CcmA) and two transmembrane proteins (CcmB).</text>
</comment>
<comment type="subcellular location">
    <subcellularLocation>
        <location evidence="1">Cell inner membrane</location>
        <topology evidence="1">Peripheral membrane protein</topology>
    </subcellularLocation>
</comment>
<comment type="similarity">
    <text evidence="1">Belongs to the ABC transporter superfamily. CcmA exporter (TC 3.A.1.107) family.</text>
</comment>
<feature type="chain" id="PRO_0000092222" description="Cytochrome c biogenesis ATP-binding export protein CcmA">
    <location>
        <begin position="1"/>
        <end position="214"/>
    </location>
</feature>
<feature type="domain" description="ABC transporter" evidence="1">
    <location>
        <begin position="12"/>
        <end position="214"/>
    </location>
</feature>
<feature type="binding site" evidence="1">
    <location>
        <begin position="44"/>
        <end position="51"/>
    </location>
    <ligand>
        <name>ATP</name>
        <dbReference type="ChEBI" id="CHEBI:30616"/>
    </ligand>
</feature>
<accession>Q8PK53</accession>
<dbReference type="EC" id="7.6.2.5" evidence="1"/>
<dbReference type="EMBL" id="AE008923">
    <property type="protein sequence ID" value="AAM37176.1"/>
    <property type="molecule type" value="Genomic_DNA"/>
</dbReference>
<dbReference type="RefSeq" id="WP_003487011.1">
    <property type="nucleotide sequence ID" value="NC_003919.1"/>
</dbReference>
<dbReference type="SMR" id="Q8PK53"/>
<dbReference type="GeneID" id="66911442"/>
<dbReference type="KEGG" id="xac:XAC2323"/>
<dbReference type="eggNOG" id="COG4133">
    <property type="taxonomic scope" value="Bacteria"/>
</dbReference>
<dbReference type="HOGENOM" id="CLU_000604_1_2_6"/>
<dbReference type="Proteomes" id="UP000000576">
    <property type="component" value="Chromosome"/>
</dbReference>
<dbReference type="GO" id="GO:0005886">
    <property type="term" value="C:plasma membrane"/>
    <property type="evidence" value="ECO:0007669"/>
    <property type="project" value="UniProtKB-SubCell"/>
</dbReference>
<dbReference type="GO" id="GO:0015439">
    <property type="term" value="F:ABC-type heme transporter activity"/>
    <property type="evidence" value="ECO:0007669"/>
    <property type="project" value="UniProtKB-EC"/>
</dbReference>
<dbReference type="GO" id="GO:0005524">
    <property type="term" value="F:ATP binding"/>
    <property type="evidence" value="ECO:0007669"/>
    <property type="project" value="UniProtKB-KW"/>
</dbReference>
<dbReference type="GO" id="GO:0016887">
    <property type="term" value="F:ATP hydrolysis activity"/>
    <property type="evidence" value="ECO:0007669"/>
    <property type="project" value="InterPro"/>
</dbReference>
<dbReference type="GO" id="GO:0017004">
    <property type="term" value="P:cytochrome complex assembly"/>
    <property type="evidence" value="ECO:0007669"/>
    <property type="project" value="UniProtKB-KW"/>
</dbReference>
<dbReference type="Gene3D" id="3.40.50.300">
    <property type="entry name" value="P-loop containing nucleotide triphosphate hydrolases"/>
    <property type="match status" value="1"/>
</dbReference>
<dbReference type="InterPro" id="IPR003593">
    <property type="entry name" value="AAA+_ATPase"/>
</dbReference>
<dbReference type="InterPro" id="IPR003439">
    <property type="entry name" value="ABC_transporter-like_ATP-bd"/>
</dbReference>
<dbReference type="InterPro" id="IPR017871">
    <property type="entry name" value="ABC_transporter-like_CS"/>
</dbReference>
<dbReference type="InterPro" id="IPR005895">
    <property type="entry name" value="ABC_transptr_haem_export_CcmA"/>
</dbReference>
<dbReference type="InterPro" id="IPR027417">
    <property type="entry name" value="P-loop_NTPase"/>
</dbReference>
<dbReference type="NCBIfam" id="TIGR01189">
    <property type="entry name" value="ccmA"/>
    <property type="match status" value="1"/>
</dbReference>
<dbReference type="NCBIfam" id="NF010061">
    <property type="entry name" value="PRK13538.1"/>
    <property type="match status" value="1"/>
</dbReference>
<dbReference type="PANTHER" id="PTHR43499">
    <property type="entry name" value="ABC TRANSPORTER I FAMILY MEMBER 1"/>
    <property type="match status" value="1"/>
</dbReference>
<dbReference type="PANTHER" id="PTHR43499:SF1">
    <property type="entry name" value="ABC TRANSPORTER I FAMILY MEMBER 1"/>
    <property type="match status" value="1"/>
</dbReference>
<dbReference type="Pfam" id="PF00005">
    <property type="entry name" value="ABC_tran"/>
    <property type="match status" value="1"/>
</dbReference>
<dbReference type="SMART" id="SM00382">
    <property type="entry name" value="AAA"/>
    <property type="match status" value="1"/>
</dbReference>
<dbReference type="SUPFAM" id="SSF52540">
    <property type="entry name" value="P-loop containing nucleoside triphosphate hydrolases"/>
    <property type="match status" value="1"/>
</dbReference>
<dbReference type="PROSITE" id="PS00211">
    <property type="entry name" value="ABC_TRANSPORTER_1"/>
    <property type="match status" value="1"/>
</dbReference>
<dbReference type="PROSITE" id="PS50893">
    <property type="entry name" value="ABC_TRANSPORTER_2"/>
    <property type="match status" value="1"/>
</dbReference>
<dbReference type="PROSITE" id="PS51243">
    <property type="entry name" value="CCMA"/>
    <property type="match status" value="1"/>
</dbReference>
<gene>
    <name evidence="1" type="primary">ccmA</name>
    <name type="ordered locus">XAC2323</name>
</gene>
<name>CCMA_XANAC</name>
<sequence>MIEPLHTAPPLLAAHDLAFSRNEEPVFGPLDFHVDAGEALLVQGDNGAGKTTLLRVLAGLLHVERGQIQIDGKSAKRGDRSRFMAYLGHLPGLKADLSTLENLHFLCGLHGRRAKQMPGSALAIVGLAGYEDALVRQLSAGQRKRLALARLWLSPAPLWLLDEPYANLDLDGITLVNRMISAHLRGGGAALVTTHGAYAAPPVRTRMLTLEVAA</sequence>
<proteinExistence type="inferred from homology"/>
<keyword id="KW-0067">ATP-binding</keyword>
<keyword id="KW-0997">Cell inner membrane</keyword>
<keyword id="KW-1003">Cell membrane</keyword>
<keyword id="KW-0201">Cytochrome c-type biogenesis</keyword>
<keyword id="KW-0472">Membrane</keyword>
<keyword id="KW-0547">Nucleotide-binding</keyword>
<keyword id="KW-1278">Translocase</keyword>
<keyword id="KW-0813">Transport</keyword>